<evidence type="ECO:0000255" key="1">
    <source>
        <dbReference type="HAMAP-Rule" id="MF_01174"/>
    </source>
</evidence>
<gene>
    <name evidence="1" type="primary">astD</name>
    <name type="ordered locus">Pput_1437</name>
</gene>
<comment type="function">
    <text evidence="1">Catalyzes the NAD-dependent reduction of succinylglutamate semialdehyde into succinylglutamate.</text>
</comment>
<comment type="catalytic activity">
    <reaction evidence="1">
        <text>N-succinyl-L-glutamate 5-semialdehyde + NAD(+) + H2O = N-succinyl-L-glutamate + NADH + 2 H(+)</text>
        <dbReference type="Rhea" id="RHEA:10812"/>
        <dbReference type="ChEBI" id="CHEBI:15377"/>
        <dbReference type="ChEBI" id="CHEBI:15378"/>
        <dbReference type="ChEBI" id="CHEBI:57540"/>
        <dbReference type="ChEBI" id="CHEBI:57945"/>
        <dbReference type="ChEBI" id="CHEBI:58520"/>
        <dbReference type="ChEBI" id="CHEBI:58763"/>
        <dbReference type="EC" id="1.2.1.71"/>
    </reaction>
</comment>
<comment type="pathway">
    <text evidence="1">Amino-acid degradation; L-arginine degradation via AST pathway; L-glutamate and succinate from L-arginine: step 4/5.</text>
</comment>
<comment type="similarity">
    <text evidence="1">Belongs to the aldehyde dehydrogenase family. AstD subfamily.</text>
</comment>
<proteinExistence type="inferred from homology"/>
<reference key="1">
    <citation type="submission" date="2007-05" db="EMBL/GenBank/DDBJ databases">
        <title>Complete sequence of Pseudomonas putida F1.</title>
        <authorList>
            <consortium name="US DOE Joint Genome Institute"/>
            <person name="Copeland A."/>
            <person name="Lucas S."/>
            <person name="Lapidus A."/>
            <person name="Barry K."/>
            <person name="Detter J.C."/>
            <person name="Glavina del Rio T."/>
            <person name="Hammon N."/>
            <person name="Israni S."/>
            <person name="Dalin E."/>
            <person name="Tice H."/>
            <person name="Pitluck S."/>
            <person name="Chain P."/>
            <person name="Malfatti S."/>
            <person name="Shin M."/>
            <person name="Vergez L."/>
            <person name="Schmutz J."/>
            <person name="Larimer F."/>
            <person name="Land M."/>
            <person name="Hauser L."/>
            <person name="Kyrpides N."/>
            <person name="Lykidis A."/>
            <person name="Parales R."/>
            <person name="Richardson P."/>
        </authorList>
    </citation>
    <scope>NUCLEOTIDE SEQUENCE [LARGE SCALE GENOMIC DNA]</scope>
    <source>
        <strain>ATCC 700007 / DSM 6899 / JCM 31910 / BCRC 17059 / LMG 24140 / F1</strain>
    </source>
</reference>
<protein>
    <recommendedName>
        <fullName evidence="1">N-succinylglutamate 5-semialdehyde dehydrogenase</fullName>
        <ecNumber evidence="1">1.2.1.71</ecNumber>
    </recommendedName>
    <alternativeName>
        <fullName evidence="1">Succinylglutamic semialdehyde dehydrogenase</fullName>
        <shortName evidence="1">SGSD</shortName>
    </alternativeName>
</protein>
<name>ASTD_PSEP1</name>
<feature type="chain" id="PRO_1000065762" description="N-succinylglutamate 5-semialdehyde dehydrogenase">
    <location>
        <begin position="1"/>
        <end position="487"/>
    </location>
</feature>
<feature type="active site" evidence="1">
    <location>
        <position position="244"/>
    </location>
</feature>
<feature type="active site" evidence="1">
    <location>
        <position position="278"/>
    </location>
</feature>
<feature type="binding site" evidence="1">
    <location>
        <begin position="221"/>
        <end position="226"/>
    </location>
    <ligand>
        <name>NAD(+)</name>
        <dbReference type="ChEBI" id="CHEBI:57540"/>
    </ligand>
</feature>
<organism>
    <name type="scientific">Pseudomonas putida (strain ATCC 700007 / DSM 6899 / JCM 31910 / BCRC 17059 / LMG 24140 / F1)</name>
    <dbReference type="NCBI Taxonomy" id="351746"/>
    <lineage>
        <taxon>Bacteria</taxon>
        <taxon>Pseudomonadati</taxon>
        <taxon>Pseudomonadota</taxon>
        <taxon>Gammaproteobacteria</taxon>
        <taxon>Pseudomonadales</taxon>
        <taxon>Pseudomonadaceae</taxon>
        <taxon>Pseudomonas</taxon>
    </lineage>
</organism>
<keyword id="KW-0056">Arginine metabolism</keyword>
<keyword id="KW-0520">NAD</keyword>
<keyword id="KW-0560">Oxidoreductase</keyword>
<dbReference type="EC" id="1.2.1.71" evidence="1"/>
<dbReference type="EMBL" id="CP000712">
    <property type="protein sequence ID" value="ABQ77595.1"/>
    <property type="molecule type" value="Genomic_DNA"/>
</dbReference>
<dbReference type="SMR" id="A5W0D5"/>
<dbReference type="KEGG" id="ppf:Pput_1437"/>
<dbReference type="eggNOG" id="COG1012">
    <property type="taxonomic scope" value="Bacteria"/>
</dbReference>
<dbReference type="HOGENOM" id="CLU_005391_1_0_6"/>
<dbReference type="UniPathway" id="UPA00185">
    <property type="reaction ID" value="UER00282"/>
</dbReference>
<dbReference type="GO" id="GO:0043824">
    <property type="term" value="F:succinylglutamate-semialdehyde dehydrogenase activity"/>
    <property type="evidence" value="ECO:0007669"/>
    <property type="project" value="UniProtKB-EC"/>
</dbReference>
<dbReference type="GO" id="GO:0019544">
    <property type="term" value="P:arginine catabolic process to glutamate"/>
    <property type="evidence" value="ECO:0007669"/>
    <property type="project" value="UniProtKB-UniRule"/>
</dbReference>
<dbReference type="GO" id="GO:0019545">
    <property type="term" value="P:arginine catabolic process to succinate"/>
    <property type="evidence" value="ECO:0007669"/>
    <property type="project" value="UniProtKB-UniRule"/>
</dbReference>
<dbReference type="CDD" id="cd07095">
    <property type="entry name" value="ALDH_SGSD_AstD"/>
    <property type="match status" value="1"/>
</dbReference>
<dbReference type="FunFam" id="3.40.309.10:FF:000013">
    <property type="entry name" value="N-succinylglutamate 5-semialdehyde dehydrogenase"/>
    <property type="match status" value="1"/>
</dbReference>
<dbReference type="FunFam" id="3.40.605.10:FF:000010">
    <property type="entry name" value="N-succinylglutamate 5-semialdehyde dehydrogenase"/>
    <property type="match status" value="1"/>
</dbReference>
<dbReference type="Gene3D" id="3.40.605.10">
    <property type="entry name" value="Aldehyde Dehydrogenase, Chain A, domain 1"/>
    <property type="match status" value="1"/>
</dbReference>
<dbReference type="Gene3D" id="3.40.309.10">
    <property type="entry name" value="Aldehyde Dehydrogenase, Chain A, domain 2"/>
    <property type="match status" value="1"/>
</dbReference>
<dbReference type="HAMAP" id="MF_01174">
    <property type="entry name" value="Aldedh_AstD"/>
    <property type="match status" value="1"/>
</dbReference>
<dbReference type="InterPro" id="IPR016161">
    <property type="entry name" value="Ald_DH/histidinol_DH"/>
</dbReference>
<dbReference type="InterPro" id="IPR016163">
    <property type="entry name" value="Ald_DH_C"/>
</dbReference>
<dbReference type="InterPro" id="IPR016160">
    <property type="entry name" value="Ald_DH_CS_CYS"/>
</dbReference>
<dbReference type="InterPro" id="IPR029510">
    <property type="entry name" value="Ald_DH_CS_GLU"/>
</dbReference>
<dbReference type="InterPro" id="IPR016162">
    <property type="entry name" value="Ald_DH_N"/>
</dbReference>
<dbReference type="InterPro" id="IPR015590">
    <property type="entry name" value="Aldehyde_DH_dom"/>
</dbReference>
<dbReference type="InterPro" id="IPR017649">
    <property type="entry name" value="SuccinylGlu_semiald_DH_AstD"/>
</dbReference>
<dbReference type="NCBIfam" id="TIGR03240">
    <property type="entry name" value="arg_catab_astD"/>
    <property type="match status" value="1"/>
</dbReference>
<dbReference type="NCBIfam" id="NF006992">
    <property type="entry name" value="PRK09457.1"/>
    <property type="match status" value="1"/>
</dbReference>
<dbReference type="PANTHER" id="PTHR11699">
    <property type="entry name" value="ALDEHYDE DEHYDROGENASE-RELATED"/>
    <property type="match status" value="1"/>
</dbReference>
<dbReference type="Pfam" id="PF00171">
    <property type="entry name" value="Aldedh"/>
    <property type="match status" value="1"/>
</dbReference>
<dbReference type="SUPFAM" id="SSF53720">
    <property type="entry name" value="ALDH-like"/>
    <property type="match status" value="1"/>
</dbReference>
<dbReference type="PROSITE" id="PS00070">
    <property type="entry name" value="ALDEHYDE_DEHYDR_CYS"/>
    <property type="match status" value="1"/>
</dbReference>
<dbReference type="PROSITE" id="PS00687">
    <property type="entry name" value="ALDEHYDE_DEHYDR_GLU"/>
    <property type="match status" value="1"/>
</dbReference>
<accession>A5W0D5</accession>
<sequence>MTTHYIAGNWQAGQGETLQSLNPVTQAVIWQGQGADASQVDTAVQAARQAFPAWAQLSLEARIDVLEKFAAQLKVHAEAMAQCIGEETGKPLWESATEVTSMINKVAISVQSYRERTGEKSGPLADATAVLRHKPHGVVAVFGPYNFPGHLPNGHIVPALLAGNCVVFKPSELTPKVAELTVNCWIAAGLPAGVLNLVQGARETGVALAANPGIDGLFFTGSSRTGNLLHQQFAGRPDKILALEMGGNNPLVVDEVKDLDAAVYTIVQSAFISAGQRCTCARRLLVPQGAWGDALIARLVEVCKTITVGAFDEQPAPFMGSVISLQAARALLAAQVELAAKGGVKLLEMTQPQADAALLTPGIVDVTAVADRPDEEFFGPLLQVIRYGDFDAAIDEANNTQYGLAAGLLSDSRARYQYFWLRSRAGIVNWNKQLTGAASSAPFGGVGASGNHRASAYYAADYCAYPVASLETASLALPATLTPGVTL</sequence>